<organism>
    <name type="scientific">Penicillium brasilianum</name>
    <dbReference type="NCBI Taxonomy" id="104259"/>
    <lineage>
        <taxon>Eukaryota</taxon>
        <taxon>Fungi</taxon>
        <taxon>Dikarya</taxon>
        <taxon>Ascomycota</taxon>
        <taxon>Pezizomycotina</taxon>
        <taxon>Eurotiomycetes</taxon>
        <taxon>Eurotiomycetidae</taxon>
        <taxon>Eurotiales</taxon>
        <taxon>Aspergillaceae</taxon>
        <taxon>Penicillium</taxon>
    </lineage>
</organism>
<name>AUSJ_PENBI</name>
<accession>A0A0F7TN69</accession>
<feature type="chain" id="PRO_0000453833" description="Austinoid biosynthesis clusters protein J">
    <location>
        <begin position="1"/>
        <end position="172"/>
    </location>
</feature>
<comment type="function">
    <text evidence="1 3">Part of the gene cluster B that mediates the biosynthesis of the fungal meroterpenoid acetoxydehydroaustin (PubMed:29076725). The first step of the pathway is the synthesis of 3,5-dimethylorsellinic acid by the polyketide synthase ausA (By similarity). 3,5-dimethylorsellinic acid is then prenylated by the polyprenyl transferase ausN (By similarity). Further epoxidation by the FAD-dependent monooxygenase ausM and cyclization by the probable terpene cyclase ausL lead to the formation of protoaustinoid A (By similarity). Protoaustinoid A is then oxidized to spiro-lactone preaustinoid A3 by the combined action of the FAD-binding monooxygenases ausB and ausC, and the dioxygenase ausE (By similarity). Acid-catalyzed keto-rearrangement and ring contraction of the tetraketide portion of preaustinoid A3 by ausJ lead to the formation of preaustinoid A4 (By similarity). The aldo-keto reductase ausK, with the help of ausH, is involved in the next step by transforming preaustinoid A4 into isoaustinone which is in turn hydroxylated by the P450 monooxygenase ausI to form austinolide (By similarity). The cytochrome P450 monooxygenase ausG then modifies austinolide to austinol (By similarity). Austinol is further acetylated to austin by the O-acetyltransferase ausP, which spontaneously changes to dehydroaustin (PubMed:29076725). The cytochrome P450 monooxygenase then converts dehydroaustin is into 7-dehydrodehydroaustin (PubMed:29076725). The hydroxylation catalyzed by ausR permits the second O-acetyltransferase ausQ to add an additional acetyl group to the molecule, leading to the formation of acetoxydehydroaustin (PubMed:29076725). Due to genetic rearrangements of the clusters and the subsequent loss of some enzymes, the end product of the Penicillium brasilianum austinoid biosynthesis clusters is acetoxydehydroaustin (PubMed:29076725).</text>
</comment>
<comment type="pathway">
    <text evidence="6">Secondary metabolite biosynthesis; terpenoid biosynthesis.</text>
</comment>
<comment type="subunit">
    <text evidence="2">Homodimer.</text>
</comment>
<comment type="miscellaneous">
    <text evidence="6">In A.calidoustus, the austinoid gene cluster lies on a contiguous DNA region, while clusters from E.nidulans and P.brasilianum are split in their respective genomes. Genetic rearrangements provoked variability among the clusters and E.nidulans produces the least number of austionoid derivatives with the end products austinol and dehydroaustinol, while P.brasilianum can produce until acetoxydehydroaustin, and A.calidoustus produces the highest number of identified derivatives.</text>
</comment>
<comment type="similarity">
    <text evidence="5">Belongs to the trt14 isomerase family.</text>
</comment>
<proteinExistence type="inferred from homology"/>
<reference key="1">
    <citation type="journal article" date="2015" name="Genome Announc.">
        <title>Draft genome sequence of the fungus Penicillium brasilianum MG11.</title>
        <authorList>
            <person name="Horn F."/>
            <person name="Linde J."/>
            <person name="Mattern D.J."/>
            <person name="Walther G."/>
            <person name="Guthke R."/>
            <person name="Brakhage A.A."/>
            <person name="Valiante V."/>
        </authorList>
    </citation>
    <scope>NUCLEOTIDE SEQUENCE [LARGE SCALE GENOMIC DNA]</scope>
    <source>
        <strain>MG11</strain>
    </source>
</reference>
<reference key="2">
    <citation type="journal article" date="2016" name="J. Am. Chem. Soc.">
        <title>Discovery of key dioxygenases that diverged the paraherquonin and acetoxydehydroaustin pathways in Penicillium brasilianum.</title>
        <authorList>
            <person name="Matsuda Y."/>
            <person name="Iwabuchi T."/>
            <person name="Fujimoto T."/>
            <person name="Awakawa T."/>
            <person name="Nakashima Y."/>
            <person name="Mori T."/>
            <person name="Zhang H."/>
            <person name="Hayashi F."/>
            <person name="Abe I."/>
        </authorList>
    </citation>
    <scope>FUNCTION</scope>
</reference>
<reference key="3">
    <citation type="journal article" date="2017" name="ACS Chem. Biol.">
        <title>Rewiring of the austinoid biosynthetic pathway in filamentous fungi.</title>
        <authorList>
            <person name="Mattern D.J."/>
            <person name="Valiante V."/>
            <person name="Horn F."/>
            <person name="Petzke L."/>
            <person name="Brakhage A.A."/>
        </authorList>
    </citation>
    <scope>FUNCTION</scope>
</reference>
<gene>
    <name evidence="4" type="primary">ausJ</name>
    <name type="ORF">PMG11_06819</name>
</gene>
<keyword id="KW-1185">Reference proteome</keyword>
<dbReference type="EMBL" id="CDHK01000006">
    <property type="protein sequence ID" value="CEJ58149.1"/>
    <property type="molecule type" value="Genomic_DNA"/>
</dbReference>
<dbReference type="SMR" id="A0A0F7TN69"/>
<dbReference type="STRING" id="104259.A0A0F7TN69"/>
<dbReference type="OrthoDB" id="3758478at2759"/>
<dbReference type="UniPathway" id="UPA00213"/>
<dbReference type="Proteomes" id="UP000042958">
    <property type="component" value="Unassembled WGS sequence"/>
</dbReference>
<dbReference type="GO" id="GO:0016114">
    <property type="term" value="P:terpenoid biosynthetic process"/>
    <property type="evidence" value="ECO:0007669"/>
    <property type="project" value="UniProtKB-UniPathway"/>
</dbReference>
<dbReference type="FunFam" id="3.10.450.50:FF:000062">
    <property type="entry name" value="Austinol synthesis protein F"/>
    <property type="match status" value="1"/>
</dbReference>
<dbReference type="Gene3D" id="3.10.450.50">
    <property type="match status" value="1"/>
</dbReference>
<dbReference type="InterPro" id="IPR050977">
    <property type="entry name" value="Fungal_Meroterpenoid_Isomerase"/>
</dbReference>
<dbReference type="PANTHER" id="PTHR39598:SF1">
    <property type="entry name" value="AUSTINOID BIOSYNTHESIS CLUSTERS PROTEIN F-RELATED"/>
    <property type="match status" value="1"/>
</dbReference>
<dbReference type="PANTHER" id="PTHR39598">
    <property type="entry name" value="AUSTINOL SYNTHESIS PROTEIN F-RELATED"/>
    <property type="match status" value="1"/>
</dbReference>
<protein>
    <recommendedName>
        <fullName evidence="4">Austinoid biosynthesis clusters protein J</fullName>
    </recommendedName>
</protein>
<sequence>MLSRSHSNATMSTTRHRLLATASRFVETLESLDMDAMLAVRSSTCLHHMCCPSFRNYSITNDQTREALPQWKATIKKYKFGVLDDSQTLVDEQARKVMIRAETAAETTVGDYNNEYVFILRMTEDCNAVDEIWEFYDTIRLRDLRHRLEAGHVPIGVDAPAPFTTTASPAAL</sequence>
<evidence type="ECO:0000250" key="1">
    <source>
        <dbReference type="UniProtKB" id="C8VQ92"/>
    </source>
</evidence>
<evidence type="ECO:0000250" key="2">
    <source>
        <dbReference type="UniProtKB" id="Q5AR31"/>
    </source>
</evidence>
<evidence type="ECO:0000269" key="3">
    <source>
    </source>
</evidence>
<evidence type="ECO:0000303" key="4">
    <source>
    </source>
</evidence>
<evidence type="ECO:0000305" key="5"/>
<evidence type="ECO:0000305" key="6">
    <source>
    </source>
</evidence>